<keyword id="KW-0067">ATP-binding</keyword>
<keyword id="KW-0143">Chaperone</keyword>
<keyword id="KW-0479">Metal-binding</keyword>
<keyword id="KW-0547">Nucleotide-binding</keyword>
<keyword id="KW-1185">Reference proteome</keyword>
<keyword id="KW-0862">Zinc</keyword>
<accession>C5BXF8</accession>
<sequence length="424" mass="46428">MARAGEGADLLKCSFCGKSQKQVKKLIAGPGVYICDECIDLCNEIIEEELAEATEIGLVDLPRPKEIFAHLEQYIIGQDSAKKSLSVAVYNHYKRIQARESGTGLGEDGVEIAKSNVLLIGPTGTGKTYLAQTLAKMLNVPFAIADATALTEAGYVGEDVENILLKLIQAADFDTKKAETGIIYIDEVDKIARKAENPSITRDVSGEGVQQALLKIIEGTQASVPPQGGRKHPHQEFIQIDTTNVLFIVAGAFAGLDDIIATRSRRRGVGFNAPLHDADEEDLFSQVRPEDLQKYGLIPEFIGRLPVVATVTKLDQEALVRILTEPKNALVRQYQRMFEIDGVELEFTDDAIESVADQALLRGTGARGLRAILEEVLMPVMFDVPGRDDVERVVITREVVLENVNPTLVPREAPSRRTPREKSA</sequence>
<name>CLPX_BEUC1</name>
<gene>
    <name evidence="1" type="primary">clpX</name>
    <name type="ordered locus">Bcav_2596</name>
</gene>
<feature type="chain" id="PRO_1000203726" description="ATP-dependent Clp protease ATP-binding subunit ClpX">
    <location>
        <begin position="1"/>
        <end position="424"/>
    </location>
</feature>
<feature type="domain" description="ClpX-type ZB" evidence="2">
    <location>
        <begin position="1"/>
        <end position="54"/>
    </location>
</feature>
<feature type="binding site" evidence="2">
    <location>
        <position position="13"/>
    </location>
    <ligand>
        <name>Zn(2+)</name>
        <dbReference type="ChEBI" id="CHEBI:29105"/>
    </ligand>
</feature>
<feature type="binding site" evidence="2">
    <location>
        <position position="16"/>
    </location>
    <ligand>
        <name>Zn(2+)</name>
        <dbReference type="ChEBI" id="CHEBI:29105"/>
    </ligand>
</feature>
<feature type="binding site" evidence="2">
    <location>
        <position position="35"/>
    </location>
    <ligand>
        <name>Zn(2+)</name>
        <dbReference type="ChEBI" id="CHEBI:29105"/>
    </ligand>
</feature>
<feature type="binding site" evidence="2">
    <location>
        <position position="38"/>
    </location>
    <ligand>
        <name>Zn(2+)</name>
        <dbReference type="ChEBI" id="CHEBI:29105"/>
    </ligand>
</feature>
<feature type="binding site" evidence="1">
    <location>
        <begin position="122"/>
        <end position="129"/>
    </location>
    <ligand>
        <name>ATP</name>
        <dbReference type="ChEBI" id="CHEBI:30616"/>
    </ligand>
</feature>
<evidence type="ECO:0000255" key="1">
    <source>
        <dbReference type="HAMAP-Rule" id="MF_00175"/>
    </source>
</evidence>
<evidence type="ECO:0000255" key="2">
    <source>
        <dbReference type="PROSITE-ProRule" id="PRU01250"/>
    </source>
</evidence>
<comment type="function">
    <text evidence="1">ATP-dependent specificity component of the Clp protease. It directs the protease to specific substrates. Can perform chaperone functions in the absence of ClpP.</text>
</comment>
<comment type="subunit">
    <text evidence="1">Component of the ClpX-ClpP complex. Forms a hexameric ring that, in the presence of ATP, binds to fourteen ClpP subunits assembled into a disk-like structure with a central cavity, resembling the structure of eukaryotic proteasomes.</text>
</comment>
<comment type="similarity">
    <text evidence="1">Belongs to the ClpX chaperone family.</text>
</comment>
<protein>
    <recommendedName>
        <fullName evidence="1">ATP-dependent Clp protease ATP-binding subunit ClpX</fullName>
    </recommendedName>
</protein>
<proteinExistence type="inferred from homology"/>
<reference key="1">
    <citation type="journal article" date="2009" name="Stand. Genomic Sci.">
        <title>Complete genome sequence of Beutenbergia cavernae type strain (HKI 0122).</title>
        <authorList>
            <person name="Land M."/>
            <person name="Pukall R."/>
            <person name="Abt B."/>
            <person name="Goker M."/>
            <person name="Rohde M."/>
            <person name="Glavina Del Rio T."/>
            <person name="Tice H."/>
            <person name="Copeland A."/>
            <person name="Cheng J.F."/>
            <person name="Lucas S."/>
            <person name="Chen F."/>
            <person name="Nolan M."/>
            <person name="Bruce D."/>
            <person name="Goodwin L."/>
            <person name="Pitluck S."/>
            <person name="Ivanova N."/>
            <person name="Mavromatis K."/>
            <person name="Ovchinnikova G."/>
            <person name="Pati A."/>
            <person name="Chen A."/>
            <person name="Palaniappan K."/>
            <person name="Hauser L."/>
            <person name="Chang Y.J."/>
            <person name="Jefferies C.C."/>
            <person name="Saunders E."/>
            <person name="Brettin T."/>
            <person name="Detter J.C."/>
            <person name="Han C."/>
            <person name="Chain P."/>
            <person name="Bristow J."/>
            <person name="Eisen J.A."/>
            <person name="Markowitz V."/>
            <person name="Hugenholtz P."/>
            <person name="Kyrpides N.C."/>
            <person name="Klenk H.P."/>
            <person name="Lapidus A."/>
        </authorList>
    </citation>
    <scope>NUCLEOTIDE SEQUENCE [LARGE SCALE GENOMIC DNA]</scope>
    <source>
        <strain>ATCC BAA-8 / DSM 12333 / CCUG 43141 / JCM 11478 / NBRC 16432 / NCIMB 13614 / HKI 0122</strain>
    </source>
</reference>
<dbReference type="EMBL" id="CP001618">
    <property type="protein sequence ID" value="ACQ80841.1"/>
    <property type="molecule type" value="Genomic_DNA"/>
</dbReference>
<dbReference type="RefSeq" id="WP_015883081.1">
    <property type="nucleotide sequence ID" value="NC_012669.1"/>
</dbReference>
<dbReference type="SMR" id="C5BXF8"/>
<dbReference type="STRING" id="471853.Bcav_2596"/>
<dbReference type="KEGG" id="bcv:Bcav_2596"/>
<dbReference type="eggNOG" id="COG1219">
    <property type="taxonomic scope" value="Bacteria"/>
</dbReference>
<dbReference type="HOGENOM" id="CLU_014218_8_2_11"/>
<dbReference type="OrthoDB" id="9804062at2"/>
<dbReference type="Proteomes" id="UP000007962">
    <property type="component" value="Chromosome"/>
</dbReference>
<dbReference type="GO" id="GO:0009376">
    <property type="term" value="C:HslUV protease complex"/>
    <property type="evidence" value="ECO:0007669"/>
    <property type="project" value="TreeGrafter"/>
</dbReference>
<dbReference type="GO" id="GO:0005524">
    <property type="term" value="F:ATP binding"/>
    <property type="evidence" value="ECO:0007669"/>
    <property type="project" value="UniProtKB-UniRule"/>
</dbReference>
<dbReference type="GO" id="GO:0016887">
    <property type="term" value="F:ATP hydrolysis activity"/>
    <property type="evidence" value="ECO:0007669"/>
    <property type="project" value="InterPro"/>
</dbReference>
<dbReference type="GO" id="GO:0140662">
    <property type="term" value="F:ATP-dependent protein folding chaperone"/>
    <property type="evidence" value="ECO:0007669"/>
    <property type="project" value="InterPro"/>
</dbReference>
<dbReference type="GO" id="GO:0046983">
    <property type="term" value="F:protein dimerization activity"/>
    <property type="evidence" value="ECO:0007669"/>
    <property type="project" value="InterPro"/>
</dbReference>
<dbReference type="GO" id="GO:0051082">
    <property type="term" value="F:unfolded protein binding"/>
    <property type="evidence" value="ECO:0007669"/>
    <property type="project" value="UniProtKB-UniRule"/>
</dbReference>
<dbReference type="GO" id="GO:0008270">
    <property type="term" value="F:zinc ion binding"/>
    <property type="evidence" value="ECO:0007669"/>
    <property type="project" value="InterPro"/>
</dbReference>
<dbReference type="GO" id="GO:0051301">
    <property type="term" value="P:cell division"/>
    <property type="evidence" value="ECO:0007669"/>
    <property type="project" value="TreeGrafter"/>
</dbReference>
<dbReference type="GO" id="GO:0051603">
    <property type="term" value="P:proteolysis involved in protein catabolic process"/>
    <property type="evidence" value="ECO:0007669"/>
    <property type="project" value="TreeGrafter"/>
</dbReference>
<dbReference type="CDD" id="cd19497">
    <property type="entry name" value="RecA-like_ClpX"/>
    <property type="match status" value="1"/>
</dbReference>
<dbReference type="FunFam" id="1.10.8.60:FF:000002">
    <property type="entry name" value="ATP-dependent Clp protease ATP-binding subunit ClpX"/>
    <property type="match status" value="1"/>
</dbReference>
<dbReference type="FunFam" id="3.40.50.300:FF:000005">
    <property type="entry name" value="ATP-dependent Clp protease ATP-binding subunit ClpX"/>
    <property type="match status" value="1"/>
</dbReference>
<dbReference type="Gene3D" id="1.10.8.60">
    <property type="match status" value="1"/>
</dbReference>
<dbReference type="Gene3D" id="6.20.220.10">
    <property type="entry name" value="ClpX chaperone, C4-type zinc finger domain"/>
    <property type="match status" value="1"/>
</dbReference>
<dbReference type="Gene3D" id="3.40.50.300">
    <property type="entry name" value="P-loop containing nucleotide triphosphate hydrolases"/>
    <property type="match status" value="1"/>
</dbReference>
<dbReference type="HAMAP" id="MF_00175">
    <property type="entry name" value="ClpX"/>
    <property type="match status" value="1"/>
</dbReference>
<dbReference type="InterPro" id="IPR003593">
    <property type="entry name" value="AAA+_ATPase"/>
</dbReference>
<dbReference type="InterPro" id="IPR050052">
    <property type="entry name" value="ATP-dep_Clp_protease_ClpX"/>
</dbReference>
<dbReference type="InterPro" id="IPR003959">
    <property type="entry name" value="ATPase_AAA_core"/>
</dbReference>
<dbReference type="InterPro" id="IPR019489">
    <property type="entry name" value="Clp_ATPase_C"/>
</dbReference>
<dbReference type="InterPro" id="IPR004487">
    <property type="entry name" value="Clp_protease_ATP-bd_su_ClpX"/>
</dbReference>
<dbReference type="InterPro" id="IPR046425">
    <property type="entry name" value="ClpX_bact"/>
</dbReference>
<dbReference type="InterPro" id="IPR027417">
    <property type="entry name" value="P-loop_NTPase"/>
</dbReference>
<dbReference type="InterPro" id="IPR010603">
    <property type="entry name" value="Znf_CppX_C4"/>
</dbReference>
<dbReference type="InterPro" id="IPR038366">
    <property type="entry name" value="Znf_CppX_C4_sf"/>
</dbReference>
<dbReference type="NCBIfam" id="TIGR00382">
    <property type="entry name" value="clpX"/>
    <property type="match status" value="1"/>
</dbReference>
<dbReference type="NCBIfam" id="NF003745">
    <property type="entry name" value="PRK05342.1"/>
    <property type="match status" value="1"/>
</dbReference>
<dbReference type="PANTHER" id="PTHR48102:SF7">
    <property type="entry name" value="ATP-DEPENDENT CLP PROTEASE ATP-BINDING SUBUNIT CLPX-LIKE, MITOCHONDRIAL"/>
    <property type="match status" value="1"/>
</dbReference>
<dbReference type="PANTHER" id="PTHR48102">
    <property type="entry name" value="ATP-DEPENDENT CLP PROTEASE ATP-BINDING SUBUNIT CLPX-LIKE, MITOCHONDRIAL-RELATED"/>
    <property type="match status" value="1"/>
</dbReference>
<dbReference type="Pfam" id="PF07724">
    <property type="entry name" value="AAA_2"/>
    <property type="match status" value="1"/>
</dbReference>
<dbReference type="Pfam" id="PF10431">
    <property type="entry name" value="ClpB_D2-small"/>
    <property type="match status" value="1"/>
</dbReference>
<dbReference type="Pfam" id="PF06689">
    <property type="entry name" value="zf-C4_ClpX"/>
    <property type="match status" value="1"/>
</dbReference>
<dbReference type="SMART" id="SM00382">
    <property type="entry name" value="AAA"/>
    <property type="match status" value="1"/>
</dbReference>
<dbReference type="SMART" id="SM01086">
    <property type="entry name" value="ClpB_D2-small"/>
    <property type="match status" value="1"/>
</dbReference>
<dbReference type="SMART" id="SM00994">
    <property type="entry name" value="zf-C4_ClpX"/>
    <property type="match status" value="1"/>
</dbReference>
<dbReference type="SUPFAM" id="SSF57716">
    <property type="entry name" value="Glucocorticoid receptor-like (DNA-binding domain)"/>
    <property type="match status" value="1"/>
</dbReference>
<dbReference type="SUPFAM" id="SSF52540">
    <property type="entry name" value="P-loop containing nucleoside triphosphate hydrolases"/>
    <property type="match status" value="1"/>
</dbReference>
<dbReference type="PROSITE" id="PS51902">
    <property type="entry name" value="CLPX_ZB"/>
    <property type="match status" value="1"/>
</dbReference>
<organism>
    <name type="scientific">Beutenbergia cavernae (strain ATCC BAA-8 / DSM 12333 / CCUG 43141 / JCM 11478 / NBRC 16432 / NCIMB 13614 / HKI 0122)</name>
    <dbReference type="NCBI Taxonomy" id="471853"/>
    <lineage>
        <taxon>Bacteria</taxon>
        <taxon>Bacillati</taxon>
        <taxon>Actinomycetota</taxon>
        <taxon>Actinomycetes</taxon>
        <taxon>Micrococcales</taxon>
        <taxon>Beutenbergiaceae</taxon>
        <taxon>Beutenbergia</taxon>
    </lineage>
</organism>